<reference key="1">
    <citation type="journal article" date="2002" name="Nucleic Acids Res.">
        <title>Genome sequence of Shigella flexneri 2a: insights into pathogenicity through comparison with genomes of Escherichia coli K12 and O157.</title>
        <authorList>
            <person name="Jin Q."/>
            <person name="Yuan Z."/>
            <person name="Xu J."/>
            <person name="Wang Y."/>
            <person name="Shen Y."/>
            <person name="Lu W."/>
            <person name="Wang J."/>
            <person name="Liu H."/>
            <person name="Yang J."/>
            <person name="Yang F."/>
            <person name="Zhang X."/>
            <person name="Zhang J."/>
            <person name="Yang G."/>
            <person name="Wu H."/>
            <person name="Qu D."/>
            <person name="Dong J."/>
            <person name="Sun L."/>
            <person name="Xue Y."/>
            <person name="Zhao A."/>
            <person name="Gao Y."/>
            <person name="Zhu J."/>
            <person name="Kan B."/>
            <person name="Ding K."/>
            <person name="Chen S."/>
            <person name="Cheng H."/>
            <person name="Yao Z."/>
            <person name="He B."/>
            <person name="Chen R."/>
            <person name="Ma D."/>
            <person name="Qiang B."/>
            <person name="Wen Y."/>
            <person name="Hou Y."/>
            <person name="Yu J."/>
        </authorList>
    </citation>
    <scope>NUCLEOTIDE SEQUENCE [LARGE SCALE GENOMIC DNA]</scope>
    <source>
        <strain>301 / Serotype 2a</strain>
    </source>
</reference>
<reference key="2">
    <citation type="journal article" date="2003" name="Infect. Immun.">
        <title>Complete genome sequence and comparative genomics of Shigella flexneri serotype 2a strain 2457T.</title>
        <authorList>
            <person name="Wei J."/>
            <person name="Goldberg M.B."/>
            <person name="Burland V."/>
            <person name="Venkatesan M.M."/>
            <person name="Deng W."/>
            <person name="Fournier G."/>
            <person name="Mayhew G.F."/>
            <person name="Plunkett G. III"/>
            <person name="Rose D.J."/>
            <person name="Darling A."/>
            <person name="Mau B."/>
            <person name="Perna N.T."/>
            <person name="Payne S.M."/>
            <person name="Runyen-Janecky L.J."/>
            <person name="Zhou S."/>
            <person name="Schwartz D.C."/>
            <person name="Blattner F.R."/>
        </authorList>
    </citation>
    <scope>NUCLEOTIDE SEQUENCE [LARGE SCALE GENOMIC DNA]</scope>
    <source>
        <strain>ATCC 700930 / 2457T / Serotype 2a</strain>
    </source>
</reference>
<name>SOTB_SHIFL</name>
<protein>
    <recommendedName>
        <fullName evidence="2">Probable sugar efflux transporter</fullName>
    </recommendedName>
</protein>
<feature type="chain" id="PRO_0000209336" description="Probable sugar efflux transporter">
    <location>
        <begin position="1"/>
        <end position="396"/>
    </location>
</feature>
<feature type="topological domain" description="Cytoplasmic" evidence="1">
    <location>
        <begin position="1"/>
        <end position="14"/>
    </location>
</feature>
<feature type="transmembrane region" description="Helical" evidence="2">
    <location>
        <begin position="15"/>
        <end position="35"/>
    </location>
</feature>
<feature type="topological domain" description="Periplasmic" evidence="1">
    <location>
        <begin position="36"/>
        <end position="49"/>
    </location>
</feature>
<feature type="transmembrane region" description="Helical" evidence="2">
    <location>
        <begin position="50"/>
        <end position="70"/>
    </location>
</feature>
<feature type="topological domain" description="Cytoplasmic" evidence="1">
    <location>
        <begin position="71"/>
        <end position="80"/>
    </location>
</feature>
<feature type="transmembrane region" description="Helical" evidence="2">
    <location>
        <begin position="81"/>
        <end position="101"/>
    </location>
</feature>
<feature type="topological domain" description="Periplasmic" evidence="1">
    <location>
        <position position="102"/>
    </location>
</feature>
<feature type="transmembrane region" description="Helical" evidence="2">
    <location>
        <begin position="103"/>
        <end position="123"/>
    </location>
</feature>
<feature type="topological domain" description="Cytoplasmic" evidence="1">
    <location>
        <begin position="124"/>
        <end position="135"/>
    </location>
</feature>
<feature type="transmembrane region" description="Helical" evidence="2">
    <location>
        <begin position="136"/>
        <end position="156"/>
    </location>
</feature>
<feature type="topological domain" description="Periplasmic" evidence="1">
    <location>
        <begin position="157"/>
        <end position="169"/>
    </location>
</feature>
<feature type="transmembrane region" description="Helical" evidence="2">
    <location>
        <begin position="170"/>
        <end position="190"/>
    </location>
</feature>
<feature type="topological domain" description="Cytoplasmic" evidence="1">
    <location>
        <begin position="191"/>
        <end position="208"/>
    </location>
</feature>
<feature type="transmembrane region" description="Helical" evidence="2">
    <location>
        <begin position="209"/>
        <end position="229"/>
    </location>
</feature>
<feature type="topological domain" description="Periplasmic" evidence="1">
    <location>
        <begin position="230"/>
        <end position="245"/>
    </location>
</feature>
<feature type="transmembrane region" description="Helical" evidence="2">
    <location>
        <begin position="246"/>
        <end position="266"/>
    </location>
</feature>
<feature type="topological domain" description="Cytoplasmic" evidence="1">
    <location>
        <begin position="267"/>
        <end position="274"/>
    </location>
</feature>
<feature type="transmembrane region" description="Helical" evidence="2">
    <location>
        <begin position="275"/>
        <end position="295"/>
    </location>
</feature>
<feature type="topological domain" description="Periplasmic" evidence="1">
    <location>
        <begin position="296"/>
        <end position="298"/>
    </location>
</feature>
<feature type="transmembrane region" description="Helical" evidence="2">
    <location>
        <begin position="299"/>
        <end position="319"/>
    </location>
</feature>
<feature type="topological domain" description="Cytoplasmic" evidence="1">
    <location>
        <begin position="320"/>
        <end position="332"/>
    </location>
</feature>
<feature type="transmembrane region" description="Helical" evidence="2">
    <location>
        <begin position="333"/>
        <end position="353"/>
    </location>
</feature>
<feature type="topological domain" description="Periplasmic" evidence="1">
    <location>
        <begin position="354"/>
        <end position="363"/>
    </location>
</feature>
<feature type="transmembrane region" description="Helical" evidence="2">
    <location>
        <begin position="364"/>
        <end position="384"/>
    </location>
</feature>
<feature type="topological domain" description="Cytoplasmic" evidence="1">
    <location>
        <begin position="385"/>
        <end position="396"/>
    </location>
</feature>
<feature type="sequence conflict" description="In Ref. 1; AAN43155." evidence="3" ref="1">
    <original>H</original>
    <variation>P</variation>
    <location>
        <position position="359"/>
    </location>
</feature>
<accession>Q7UCG7</accession>
<accession>Q83RE3</accession>
<keyword id="KW-0997">Cell inner membrane</keyword>
<keyword id="KW-1003">Cell membrane</keyword>
<keyword id="KW-0472">Membrane</keyword>
<keyword id="KW-1185">Reference proteome</keyword>
<keyword id="KW-0762">Sugar transport</keyword>
<keyword id="KW-0812">Transmembrane</keyword>
<keyword id="KW-1133">Transmembrane helix</keyword>
<keyword id="KW-0813">Transport</keyword>
<evidence type="ECO:0000255" key="1"/>
<evidence type="ECO:0000255" key="2">
    <source>
        <dbReference type="HAMAP-Rule" id="MF_00517"/>
    </source>
</evidence>
<evidence type="ECO:0000305" key="3"/>
<organism>
    <name type="scientific">Shigella flexneri</name>
    <dbReference type="NCBI Taxonomy" id="623"/>
    <lineage>
        <taxon>Bacteria</taxon>
        <taxon>Pseudomonadati</taxon>
        <taxon>Pseudomonadota</taxon>
        <taxon>Gammaproteobacteria</taxon>
        <taxon>Enterobacterales</taxon>
        <taxon>Enterobacteriaceae</taxon>
        <taxon>Shigella</taxon>
    </lineage>
</organism>
<gene>
    <name evidence="2" type="primary">sotB</name>
    <name type="ordered locus">SF1566</name>
    <name type="ordered locus">S1693</name>
</gene>
<comment type="function">
    <text evidence="2">Involved in the efflux of sugars. The physiological role may be the reduction of the intracellular concentration of toxic sugars or sugar metabolites.</text>
</comment>
<comment type="subcellular location">
    <subcellularLocation>
        <location evidence="2">Cell inner membrane</location>
        <topology evidence="2">Multi-pass membrane protein</topology>
    </subcellularLocation>
</comment>
<comment type="similarity">
    <text evidence="2">Belongs to the major facilitator superfamily. SotB (TC 2.A.1.2) family.</text>
</comment>
<comment type="sequence caution" evidence="3">
    <conflict type="erroneous termination">
        <sequence resource="EMBL-CDS" id="AAN43155"/>
    </conflict>
    <text>Truncated C-terminus.</text>
</comment>
<proteinExistence type="inferred from homology"/>
<dbReference type="EMBL" id="AE005674">
    <property type="protein sequence ID" value="AAN43155.1"/>
    <property type="status" value="ALT_SEQ"/>
    <property type="molecule type" value="Genomic_DNA"/>
</dbReference>
<dbReference type="EMBL" id="AE014073">
    <property type="protein sequence ID" value="AAP17049.1"/>
    <property type="molecule type" value="Genomic_DNA"/>
</dbReference>
<dbReference type="SMR" id="Q7UCG7"/>
<dbReference type="STRING" id="198214.SF1566"/>
<dbReference type="PaxDb" id="198214-SF1566"/>
<dbReference type="KEGG" id="sfx:S1693"/>
<dbReference type="PATRIC" id="fig|623.156.peg.351"/>
<dbReference type="HOGENOM" id="CLU_001265_61_1_6"/>
<dbReference type="Proteomes" id="UP000001006">
    <property type="component" value="Chromosome"/>
</dbReference>
<dbReference type="Proteomes" id="UP000002673">
    <property type="component" value="Chromosome"/>
</dbReference>
<dbReference type="GO" id="GO:0005886">
    <property type="term" value="C:plasma membrane"/>
    <property type="evidence" value="ECO:0007669"/>
    <property type="project" value="UniProtKB-SubCell"/>
</dbReference>
<dbReference type="GO" id="GO:0015144">
    <property type="term" value="F:carbohydrate transmembrane transporter activity"/>
    <property type="evidence" value="ECO:0007669"/>
    <property type="project" value="UniProtKB-UniRule"/>
</dbReference>
<dbReference type="CDD" id="cd17324">
    <property type="entry name" value="MFS_NepI_like"/>
    <property type="match status" value="1"/>
</dbReference>
<dbReference type="FunFam" id="1.20.1250.20:FF:000079">
    <property type="entry name" value="Probable sugar efflux transporter"/>
    <property type="match status" value="1"/>
</dbReference>
<dbReference type="Gene3D" id="1.20.1250.20">
    <property type="entry name" value="MFS general substrate transporter like domains"/>
    <property type="match status" value="1"/>
</dbReference>
<dbReference type="HAMAP" id="MF_00517">
    <property type="entry name" value="MFS_SotB"/>
    <property type="match status" value="1"/>
</dbReference>
<dbReference type="InterPro" id="IPR011701">
    <property type="entry name" value="MFS"/>
</dbReference>
<dbReference type="InterPro" id="IPR020846">
    <property type="entry name" value="MFS_dom"/>
</dbReference>
<dbReference type="InterPro" id="IPR050189">
    <property type="entry name" value="MFS_Efflux_Transporters"/>
</dbReference>
<dbReference type="InterPro" id="IPR036259">
    <property type="entry name" value="MFS_trans_sf"/>
</dbReference>
<dbReference type="InterPro" id="IPR023495">
    <property type="entry name" value="Sugar_effux_transptr_put"/>
</dbReference>
<dbReference type="NCBIfam" id="NF002921">
    <property type="entry name" value="PRK03545.1"/>
    <property type="match status" value="1"/>
</dbReference>
<dbReference type="PANTHER" id="PTHR43124">
    <property type="entry name" value="PURINE EFFLUX PUMP PBUE"/>
    <property type="match status" value="1"/>
</dbReference>
<dbReference type="PANTHER" id="PTHR43124:SF4">
    <property type="entry name" value="SUGAR EFFLUX TRANSPORTER"/>
    <property type="match status" value="1"/>
</dbReference>
<dbReference type="Pfam" id="PF07690">
    <property type="entry name" value="MFS_1"/>
    <property type="match status" value="1"/>
</dbReference>
<dbReference type="SUPFAM" id="SSF103473">
    <property type="entry name" value="MFS general substrate transporter"/>
    <property type="match status" value="1"/>
</dbReference>
<dbReference type="PROSITE" id="PS50850">
    <property type="entry name" value="MFS"/>
    <property type="match status" value="1"/>
</dbReference>
<sequence length="396" mass="42524">MTTNTVSRKVAWLRVVTLAVAAFIFNTTEFVPVGLLSDIAQSFHMQTAQVGIMLTIYAWVVALMSLPFMLMTSQVERRKLLICLFVVFIASHVLSFLSWSFTVLVISRIGVAFAHAIFWSITASLAIRMAPAGKRAQALSLIATGTALAMVLGLPLGRIVGQYFGWRMTFFAIGIGALVTLLCLIKLLPLLPSEHSGSLKSLPLLFRRPALMSIYLLTVVVVTAHYTAYSYIEPFVQNIAGFSANFATALLLLLGGAGIIGSVIFGKLGNQYASALVSTAIALLLVCLALLLPAANSEIHLGVLSIFWGIAMMIIGLGMQVKVLALAPDATDVAMALFSGIFNIGIGAGALVGNQVSLHWSMSMIGYVGAVPAFAALIWSIIIFRRWPVTLEEQTQ</sequence>